<proteinExistence type="inferred from homology"/>
<accession>A5GIZ3</accession>
<evidence type="ECO:0000255" key="1">
    <source>
        <dbReference type="HAMAP-Rule" id="MF_00792"/>
    </source>
</evidence>
<evidence type="ECO:0000256" key="2">
    <source>
        <dbReference type="SAM" id="MobiDB-lite"/>
    </source>
</evidence>
<gene>
    <name evidence="1" type="primary">pebA</name>
    <name type="ordered locus">SynWH7803_0482</name>
</gene>
<sequence>MFDSFLNKLHQGIHQRGGQPAAVPEGLEHCHSSKSGGSIDSWLWSVPGFRRWRVTRLDAGESLQVLNSVAYPDHSLDHPLMGVDLLWFGARQKLVAVLDFQPLIQDQDYLDRHFQGLKALHERFPELNGEETMRSFDPNQYFSPWLLFCRGGAQEAEESLPAAFDAFLTAYWAMHDQALDVEAAGTSASTLSINDVERLQEAYDVYSAERDPAHGLFTSHFGKDWSDRFLHEFLFPASQST</sequence>
<keyword id="KW-0560">Oxidoreductase</keyword>
<keyword id="KW-1185">Reference proteome</keyword>
<dbReference type="EC" id="1.3.7.2" evidence="1"/>
<dbReference type="EMBL" id="CT971583">
    <property type="protein sequence ID" value="CAK22908.1"/>
    <property type="molecule type" value="Genomic_DNA"/>
</dbReference>
<dbReference type="SMR" id="A5GIZ3"/>
<dbReference type="STRING" id="32051.SynWH7803_0482"/>
<dbReference type="KEGG" id="syx:SynWH7803_0482"/>
<dbReference type="eggNOG" id="ENOG502Z8J9">
    <property type="taxonomic scope" value="Bacteria"/>
</dbReference>
<dbReference type="HOGENOM" id="CLU_086208_0_0_3"/>
<dbReference type="OrthoDB" id="527390at2"/>
<dbReference type="Proteomes" id="UP000001566">
    <property type="component" value="Chromosome"/>
</dbReference>
<dbReference type="GO" id="GO:0050617">
    <property type="term" value="F:15,16-dihydrobiliverdin:ferredoxin oxidoreductase activity"/>
    <property type="evidence" value="ECO:0007669"/>
    <property type="project" value="UniProtKB-UniRule"/>
</dbReference>
<dbReference type="GO" id="GO:0050897">
    <property type="term" value="F:cobalt ion binding"/>
    <property type="evidence" value="ECO:0007669"/>
    <property type="project" value="InterPro"/>
</dbReference>
<dbReference type="GO" id="GO:0010024">
    <property type="term" value="P:phytochromobilin biosynthetic process"/>
    <property type="evidence" value="ECO:0007669"/>
    <property type="project" value="InterPro"/>
</dbReference>
<dbReference type="Gene3D" id="3.40.1500.20">
    <property type="match status" value="1"/>
</dbReference>
<dbReference type="HAMAP" id="MF_00792">
    <property type="entry name" value="PebA"/>
    <property type="match status" value="1"/>
</dbReference>
<dbReference type="InterPro" id="IPR023658">
    <property type="entry name" value="DiHydbiliverdin_OxRdtase"/>
</dbReference>
<dbReference type="InterPro" id="IPR009249">
    <property type="entry name" value="Ferredoxin-dep_bilin_Rdtase"/>
</dbReference>
<dbReference type="NCBIfam" id="NF009720">
    <property type="entry name" value="PRK13247.1"/>
    <property type="match status" value="1"/>
</dbReference>
<dbReference type="PANTHER" id="PTHR34557">
    <property type="entry name" value="PHYTOCHROMOBILIN:FERREDOXIN OXIDOREDUCTASE, CHLOROPLASTIC"/>
    <property type="match status" value="1"/>
</dbReference>
<dbReference type="PANTHER" id="PTHR34557:SF1">
    <property type="entry name" value="PHYTOCHROMOBILIN:FERREDOXIN OXIDOREDUCTASE, CHLOROPLASTIC"/>
    <property type="match status" value="1"/>
</dbReference>
<dbReference type="Pfam" id="PF05996">
    <property type="entry name" value="Fe_bilin_red"/>
    <property type="match status" value="1"/>
</dbReference>
<organism>
    <name type="scientific">Synechococcus sp. (strain WH7803)</name>
    <dbReference type="NCBI Taxonomy" id="32051"/>
    <lineage>
        <taxon>Bacteria</taxon>
        <taxon>Bacillati</taxon>
        <taxon>Cyanobacteriota</taxon>
        <taxon>Cyanophyceae</taxon>
        <taxon>Synechococcales</taxon>
        <taxon>Synechococcaceae</taxon>
        <taxon>Synechococcus</taxon>
    </lineage>
</organism>
<name>PEBA_SYNPW</name>
<reference key="1">
    <citation type="submission" date="2006-05" db="EMBL/GenBank/DDBJ databases">
        <authorList>
            <consortium name="Genoscope"/>
        </authorList>
    </citation>
    <scope>NUCLEOTIDE SEQUENCE [LARGE SCALE GENOMIC DNA]</scope>
    <source>
        <strain>WH7803</strain>
    </source>
</reference>
<feature type="chain" id="PRO_1000046924" description="15,16-dihydrobiliverdin:ferredoxin oxidoreductase">
    <location>
        <begin position="1"/>
        <end position="241"/>
    </location>
</feature>
<feature type="region of interest" description="Disordered" evidence="2">
    <location>
        <begin position="16"/>
        <end position="35"/>
    </location>
</feature>
<comment type="function">
    <text evidence="1">Catalyzes the two-electron reduction of biliverdin IX-alpha at the C15 methine bridge.</text>
</comment>
<comment type="catalytic activity">
    <reaction evidence="1">
        <text>15,16-dihydrobiliverdin + oxidized 2[4Fe-4S]-[ferredoxin] = biliverdin IXalpha + reduced 2[4Fe-4S]-[ferredoxin] + 2 H(+)</text>
        <dbReference type="Rhea" id="RHEA:10168"/>
        <dbReference type="Rhea" id="RHEA-COMP:10002"/>
        <dbReference type="Rhea" id="RHEA-COMP:10004"/>
        <dbReference type="ChEBI" id="CHEBI:15378"/>
        <dbReference type="ChEBI" id="CHEBI:33722"/>
        <dbReference type="ChEBI" id="CHEBI:33723"/>
        <dbReference type="ChEBI" id="CHEBI:57899"/>
        <dbReference type="ChEBI" id="CHEBI:57991"/>
        <dbReference type="EC" id="1.3.7.2"/>
    </reaction>
</comment>
<comment type="similarity">
    <text evidence="1">Belongs to the HY2 family.</text>
</comment>
<protein>
    <recommendedName>
        <fullName evidence="1">15,16-dihydrobiliverdin:ferredoxin oxidoreductase</fullName>
        <ecNumber evidence="1">1.3.7.2</ecNumber>
    </recommendedName>
</protein>